<evidence type="ECO:0000255" key="1">
    <source>
        <dbReference type="HAMAP-Rule" id="MF_00147"/>
    </source>
</evidence>
<dbReference type="EC" id="5.3.1.1" evidence="1"/>
<dbReference type="EMBL" id="AE016958">
    <property type="protein sequence ID" value="AAS03483.1"/>
    <property type="molecule type" value="Genomic_DNA"/>
</dbReference>
<dbReference type="RefSeq" id="WP_003876058.1">
    <property type="nucleotide sequence ID" value="NZ_CP106873.1"/>
</dbReference>
<dbReference type="SMR" id="Q741C5"/>
<dbReference type="STRING" id="262316.MAP_1166"/>
<dbReference type="KEGG" id="mpa:MAP_1166"/>
<dbReference type="eggNOG" id="COG0149">
    <property type="taxonomic scope" value="Bacteria"/>
</dbReference>
<dbReference type="HOGENOM" id="CLU_024251_2_3_11"/>
<dbReference type="UniPathway" id="UPA00109">
    <property type="reaction ID" value="UER00189"/>
</dbReference>
<dbReference type="UniPathway" id="UPA00138"/>
<dbReference type="Proteomes" id="UP000000580">
    <property type="component" value="Chromosome"/>
</dbReference>
<dbReference type="GO" id="GO:0005829">
    <property type="term" value="C:cytosol"/>
    <property type="evidence" value="ECO:0007669"/>
    <property type="project" value="TreeGrafter"/>
</dbReference>
<dbReference type="GO" id="GO:0004807">
    <property type="term" value="F:triose-phosphate isomerase activity"/>
    <property type="evidence" value="ECO:0007669"/>
    <property type="project" value="UniProtKB-UniRule"/>
</dbReference>
<dbReference type="GO" id="GO:0006094">
    <property type="term" value="P:gluconeogenesis"/>
    <property type="evidence" value="ECO:0007669"/>
    <property type="project" value="UniProtKB-UniRule"/>
</dbReference>
<dbReference type="GO" id="GO:0046166">
    <property type="term" value="P:glyceraldehyde-3-phosphate biosynthetic process"/>
    <property type="evidence" value="ECO:0007669"/>
    <property type="project" value="TreeGrafter"/>
</dbReference>
<dbReference type="GO" id="GO:0019563">
    <property type="term" value="P:glycerol catabolic process"/>
    <property type="evidence" value="ECO:0007669"/>
    <property type="project" value="TreeGrafter"/>
</dbReference>
<dbReference type="GO" id="GO:0006096">
    <property type="term" value="P:glycolytic process"/>
    <property type="evidence" value="ECO:0007669"/>
    <property type="project" value="UniProtKB-UniRule"/>
</dbReference>
<dbReference type="CDD" id="cd00311">
    <property type="entry name" value="TIM"/>
    <property type="match status" value="1"/>
</dbReference>
<dbReference type="FunFam" id="3.20.20.70:FF:000020">
    <property type="entry name" value="Triosephosphate isomerase"/>
    <property type="match status" value="1"/>
</dbReference>
<dbReference type="Gene3D" id="3.20.20.70">
    <property type="entry name" value="Aldolase class I"/>
    <property type="match status" value="1"/>
</dbReference>
<dbReference type="HAMAP" id="MF_00147_B">
    <property type="entry name" value="TIM_B"/>
    <property type="match status" value="1"/>
</dbReference>
<dbReference type="InterPro" id="IPR013785">
    <property type="entry name" value="Aldolase_TIM"/>
</dbReference>
<dbReference type="InterPro" id="IPR035990">
    <property type="entry name" value="TIM_sf"/>
</dbReference>
<dbReference type="InterPro" id="IPR022896">
    <property type="entry name" value="TrioseP_Isoase_bac/euk"/>
</dbReference>
<dbReference type="InterPro" id="IPR000652">
    <property type="entry name" value="Triosephosphate_isomerase"/>
</dbReference>
<dbReference type="InterPro" id="IPR020861">
    <property type="entry name" value="Triosephosphate_isomerase_AS"/>
</dbReference>
<dbReference type="NCBIfam" id="TIGR00419">
    <property type="entry name" value="tim"/>
    <property type="match status" value="1"/>
</dbReference>
<dbReference type="PANTHER" id="PTHR21139">
    <property type="entry name" value="TRIOSEPHOSPHATE ISOMERASE"/>
    <property type="match status" value="1"/>
</dbReference>
<dbReference type="PANTHER" id="PTHR21139:SF42">
    <property type="entry name" value="TRIOSEPHOSPHATE ISOMERASE"/>
    <property type="match status" value="1"/>
</dbReference>
<dbReference type="Pfam" id="PF00121">
    <property type="entry name" value="TIM"/>
    <property type="match status" value="1"/>
</dbReference>
<dbReference type="SUPFAM" id="SSF51351">
    <property type="entry name" value="Triosephosphate isomerase (TIM)"/>
    <property type="match status" value="1"/>
</dbReference>
<dbReference type="PROSITE" id="PS00171">
    <property type="entry name" value="TIM_1"/>
    <property type="match status" value="1"/>
</dbReference>
<dbReference type="PROSITE" id="PS51440">
    <property type="entry name" value="TIM_2"/>
    <property type="match status" value="1"/>
</dbReference>
<comment type="function">
    <text evidence="1">Involved in the gluconeogenesis. Catalyzes stereospecifically the conversion of dihydroxyacetone phosphate (DHAP) to D-glyceraldehyde-3-phosphate (G3P).</text>
</comment>
<comment type="catalytic activity">
    <reaction evidence="1">
        <text>D-glyceraldehyde 3-phosphate = dihydroxyacetone phosphate</text>
        <dbReference type="Rhea" id="RHEA:18585"/>
        <dbReference type="ChEBI" id="CHEBI:57642"/>
        <dbReference type="ChEBI" id="CHEBI:59776"/>
        <dbReference type="EC" id="5.3.1.1"/>
    </reaction>
</comment>
<comment type="pathway">
    <text evidence="1">Carbohydrate biosynthesis; gluconeogenesis.</text>
</comment>
<comment type="pathway">
    <text evidence="1">Carbohydrate degradation; glycolysis; D-glyceraldehyde 3-phosphate from glycerone phosphate: step 1/1.</text>
</comment>
<comment type="subunit">
    <text evidence="1">Homodimer.</text>
</comment>
<comment type="subcellular location">
    <subcellularLocation>
        <location evidence="1">Cytoplasm</location>
    </subcellularLocation>
</comment>
<comment type="similarity">
    <text evidence="1">Belongs to the triosephosphate isomerase family.</text>
</comment>
<accession>Q741C5</accession>
<feature type="chain" id="PRO_0000307504" description="Triosephosphate isomerase">
    <location>
        <begin position="1"/>
        <end position="261"/>
    </location>
</feature>
<feature type="active site" description="Electrophile" evidence="1">
    <location>
        <position position="100"/>
    </location>
</feature>
<feature type="active site" description="Proton acceptor" evidence="1">
    <location>
        <position position="172"/>
    </location>
</feature>
<feature type="binding site" evidence="1">
    <location>
        <begin position="10"/>
        <end position="12"/>
    </location>
    <ligand>
        <name>substrate</name>
    </ligand>
</feature>
<feature type="binding site" evidence="1">
    <location>
        <position position="178"/>
    </location>
    <ligand>
        <name>substrate</name>
    </ligand>
</feature>
<feature type="binding site" evidence="1">
    <location>
        <position position="218"/>
    </location>
    <ligand>
        <name>substrate</name>
    </ligand>
</feature>
<feature type="binding site" evidence="1">
    <location>
        <begin position="239"/>
        <end position="240"/>
    </location>
    <ligand>
        <name>substrate</name>
    </ligand>
</feature>
<organism>
    <name type="scientific">Mycolicibacterium paratuberculosis (strain ATCC BAA-968 / K-10)</name>
    <name type="common">Mycobacterium paratuberculosis</name>
    <dbReference type="NCBI Taxonomy" id="262316"/>
    <lineage>
        <taxon>Bacteria</taxon>
        <taxon>Bacillati</taxon>
        <taxon>Actinomycetota</taxon>
        <taxon>Actinomycetes</taxon>
        <taxon>Mycobacteriales</taxon>
        <taxon>Mycobacteriaceae</taxon>
        <taxon>Mycobacterium</taxon>
        <taxon>Mycobacterium avium complex (MAC)</taxon>
    </lineage>
</organism>
<proteinExistence type="inferred from homology"/>
<reference key="1">
    <citation type="journal article" date="2005" name="Proc. Natl. Acad. Sci. U.S.A.">
        <title>The complete genome sequence of Mycobacterium avium subspecies paratuberculosis.</title>
        <authorList>
            <person name="Li L."/>
            <person name="Bannantine J.P."/>
            <person name="Zhang Q."/>
            <person name="Amonsin A."/>
            <person name="May B.J."/>
            <person name="Alt D."/>
            <person name="Banerji N."/>
            <person name="Kanjilal S."/>
            <person name="Kapur V."/>
        </authorList>
    </citation>
    <scope>NUCLEOTIDE SEQUENCE [LARGE SCALE GENOMIC DNA]</scope>
    <source>
        <strain>ATCC BAA-968 / K-10</strain>
    </source>
</reference>
<protein>
    <recommendedName>
        <fullName evidence="1">Triosephosphate isomerase</fullName>
        <shortName evidence="1">TIM</shortName>
        <shortName evidence="1">TPI</shortName>
        <ecNumber evidence="1">5.3.1.1</ecNumber>
    </recommendedName>
    <alternativeName>
        <fullName evidence="1">Triose-phosphate isomerase</fullName>
    </alternativeName>
</protein>
<name>TPIS_MYCPA</name>
<sequence length="261" mass="27545">MSRKPLIAGNWKMNLNHFEAIALVQKIAFALPDKYYDKVDVTVLPPFTDLRSVQTLVDGDKLRLSYGAQDLSQHDSGAYTGDISGAFLAKLGCTFVVVGHSERRTYHNEDDALVAAKAATALKHELTPIICIGEHLEVREAGNHVIHCEEQLRGSLAGLSAEQIGKVVIAYEPVWAIGTGRVASASDAQEVCAAIRKELASLASAQIADSVRVLYGGSVNAKNVGELIAQDDIDGGLVGGASLDGEQFATLAAIAAGGPLP</sequence>
<keyword id="KW-0963">Cytoplasm</keyword>
<keyword id="KW-0312">Gluconeogenesis</keyword>
<keyword id="KW-0324">Glycolysis</keyword>
<keyword id="KW-0413">Isomerase</keyword>
<keyword id="KW-1185">Reference proteome</keyword>
<gene>
    <name evidence="1" type="primary">tpiA</name>
    <name type="ordered locus">MAP_1166</name>
</gene>